<feature type="chain" id="PRO_0000167245" description="Small ribosomal subunit protein bS16">
    <location>
        <begin position="1"/>
        <end position="91"/>
    </location>
</feature>
<sequence length="91" mass="10235">MAVKIRLTRLGSKRNPFYRIVVADARSPRDGRIIEQIGTYNPTSANAPEIKVDEALALKWLNDGAKPTDTVHNILSKEGIMKKFDEQKKAK</sequence>
<gene>
    <name evidence="1" type="primary">rpsP</name>
    <name type="ordered locus">SAS1172</name>
</gene>
<name>RS16_STAAS</name>
<comment type="similarity">
    <text evidence="1">Belongs to the bacterial ribosomal protein bS16 family.</text>
</comment>
<dbReference type="EMBL" id="BX571857">
    <property type="protein sequence ID" value="CAG42949.1"/>
    <property type="molecule type" value="Genomic_DNA"/>
</dbReference>
<dbReference type="RefSeq" id="WP_000268754.1">
    <property type="nucleotide sequence ID" value="NC_002953.3"/>
</dbReference>
<dbReference type="SMR" id="Q6G9X5"/>
<dbReference type="GeneID" id="66839430"/>
<dbReference type="KEGG" id="sas:SAS1172"/>
<dbReference type="HOGENOM" id="CLU_100590_5_0_9"/>
<dbReference type="GO" id="GO:0005737">
    <property type="term" value="C:cytoplasm"/>
    <property type="evidence" value="ECO:0007669"/>
    <property type="project" value="UniProtKB-ARBA"/>
</dbReference>
<dbReference type="GO" id="GO:0015935">
    <property type="term" value="C:small ribosomal subunit"/>
    <property type="evidence" value="ECO:0007669"/>
    <property type="project" value="TreeGrafter"/>
</dbReference>
<dbReference type="GO" id="GO:0003735">
    <property type="term" value="F:structural constituent of ribosome"/>
    <property type="evidence" value="ECO:0007669"/>
    <property type="project" value="InterPro"/>
</dbReference>
<dbReference type="GO" id="GO:0006412">
    <property type="term" value="P:translation"/>
    <property type="evidence" value="ECO:0007669"/>
    <property type="project" value="UniProtKB-UniRule"/>
</dbReference>
<dbReference type="FunFam" id="3.30.1320.10:FF:000002">
    <property type="entry name" value="30S ribosomal protein S16"/>
    <property type="match status" value="1"/>
</dbReference>
<dbReference type="Gene3D" id="3.30.1320.10">
    <property type="match status" value="1"/>
</dbReference>
<dbReference type="HAMAP" id="MF_00385">
    <property type="entry name" value="Ribosomal_bS16"/>
    <property type="match status" value="1"/>
</dbReference>
<dbReference type="InterPro" id="IPR000307">
    <property type="entry name" value="Ribosomal_bS16"/>
</dbReference>
<dbReference type="InterPro" id="IPR023803">
    <property type="entry name" value="Ribosomal_bS16_dom_sf"/>
</dbReference>
<dbReference type="NCBIfam" id="TIGR00002">
    <property type="entry name" value="S16"/>
    <property type="match status" value="1"/>
</dbReference>
<dbReference type="PANTHER" id="PTHR12919">
    <property type="entry name" value="30S RIBOSOMAL PROTEIN S16"/>
    <property type="match status" value="1"/>
</dbReference>
<dbReference type="PANTHER" id="PTHR12919:SF20">
    <property type="entry name" value="SMALL RIBOSOMAL SUBUNIT PROTEIN BS16M"/>
    <property type="match status" value="1"/>
</dbReference>
<dbReference type="Pfam" id="PF00886">
    <property type="entry name" value="Ribosomal_S16"/>
    <property type="match status" value="1"/>
</dbReference>
<dbReference type="SUPFAM" id="SSF54565">
    <property type="entry name" value="Ribosomal protein S16"/>
    <property type="match status" value="1"/>
</dbReference>
<protein>
    <recommendedName>
        <fullName evidence="1">Small ribosomal subunit protein bS16</fullName>
    </recommendedName>
    <alternativeName>
        <fullName evidence="2">30S ribosomal protein S16</fullName>
    </alternativeName>
</protein>
<proteinExistence type="inferred from homology"/>
<reference key="1">
    <citation type="journal article" date="2004" name="Proc. Natl. Acad. Sci. U.S.A.">
        <title>Complete genomes of two clinical Staphylococcus aureus strains: evidence for the rapid evolution of virulence and drug resistance.</title>
        <authorList>
            <person name="Holden M.T.G."/>
            <person name="Feil E.J."/>
            <person name="Lindsay J.A."/>
            <person name="Peacock S.J."/>
            <person name="Day N.P.J."/>
            <person name="Enright M.C."/>
            <person name="Foster T.J."/>
            <person name="Moore C.E."/>
            <person name="Hurst L."/>
            <person name="Atkin R."/>
            <person name="Barron A."/>
            <person name="Bason N."/>
            <person name="Bentley S.D."/>
            <person name="Chillingworth C."/>
            <person name="Chillingworth T."/>
            <person name="Churcher C."/>
            <person name="Clark L."/>
            <person name="Corton C."/>
            <person name="Cronin A."/>
            <person name="Doggett J."/>
            <person name="Dowd L."/>
            <person name="Feltwell T."/>
            <person name="Hance Z."/>
            <person name="Harris B."/>
            <person name="Hauser H."/>
            <person name="Holroyd S."/>
            <person name="Jagels K."/>
            <person name="James K.D."/>
            <person name="Lennard N."/>
            <person name="Line A."/>
            <person name="Mayes R."/>
            <person name="Moule S."/>
            <person name="Mungall K."/>
            <person name="Ormond D."/>
            <person name="Quail M.A."/>
            <person name="Rabbinowitsch E."/>
            <person name="Rutherford K.M."/>
            <person name="Sanders M."/>
            <person name="Sharp S."/>
            <person name="Simmonds M."/>
            <person name="Stevens K."/>
            <person name="Whitehead S."/>
            <person name="Barrell B.G."/>
            <person name="Spratt B.G."/>
            <person name="Parkhill J."/>
        </authorList>
    </citation>
    <scope>NUCLEOTIDE SEQUENCE [LARGE SCALE GENOMIC DNA]</scope>
    <source>
        <strain>MSSA476</strain>
    </source>
</reference>
<accession>Q6G9X5</accession>
<organism>
    <name type="scientific">Staphylococcus aureus (strain MSSA476)</name>
    <dbReference type="NCBI Taxonomy" id="282459"/>
    <lineage>
        <taxon>Bacteria</taxon>
        <taxon>Bacillati</taxon>
        <taxon>Bacillota</taxon>
        <taxon>Bacilli</taxon>
        <taxon>Bacillales</taxon>
        <taxon>Staphylococcaceae</taxon>
        <taxon>Staphylococcus</taxon>
    </lineage>
</organism>
<evidence type="ECO:0000255" key="1">
    <source>
        <dbReference type="HAMAP-Rule" id="MF_00385"/>
    </source>
</evidence>
<evidence type="ECO:0000305" key="2"/>
<keyword id="KW-0687">Ribonucleoprotein</keyword>
<keyword id="KW-0689">Ribosomal protein</keyword>